<feature type="chain" id="PRO_1000195880" description="Large ribosomal subunit protein bL27">
    <location>
        <begin position="1"/>
        <end position="85"/>
    </location>
</feature>
<evidence type="ECO:0000255" key="1">
    <source>
        <dbReference type="HAMAP-Rule" id="MF_00539"/>
    </source>
</evidence>
<evidence type="ECO:0000305" key="2"/>
<dbReference type="EMBL" id="CP001230">
    <property type="protein sequence ID" value="ACO04831.1"/>
    <property type="molecule type" value="Genomic_DNA"/>
</dbReference>
<dbReference type="RefSeq" id="WP_015898935.1">
    <property type="nucleotide sequence ID" value="NC_012440.1"/>
</dbReference>
<dbReference type="SMR" id="C0QT35"/>
<dbReference type="STRING" id="123214.PERMA_0052"/>
<dbReference type="PaxDb" id="123214-PERMA_0052"/>
<dbReference type="KEGG" id="pmx:PERMA_0052"/>
<dbReference type="eggNOG" id="COG0211">
    <property type="taxonomic scope" value="Bacteria"/>
</dbReference>
<dbReference type="HOGENOM" id="CLU_095424_4_1_0"/>
<dbReference type="OrthoDB" id="9803474at2"/>
<dbReference type="Proteomes" id="UP000001366">
    <property type="component" value="Chromosome"/>
</dbReference>
<dbReference type="GO" id="GO:0022625">
    <property type="term" value="C:cytosolic large ribosomal subunit"/>
    <property type="evidence" value="ECO:0007669"/>
    <property type="project" value="TreeGrafter"/>
</dbReference>
<dbReference type="GO" id="GO:0003735">
    <property type="term" value="F:structural constituent of ribosome"/>
    <property type="evidence" value="ECO:0007669"/>
    <property type="project" value="InterPro"/>
</dbReference>
<dbReference type="GO" id="GO:0006412">
    <property type="term" value="P:translation"/>
    <property type="evidence" value="ECO:0007669"/>
    <property type="project" value="UniProtKB-UniRule"/>
</dbReference>
<dbReference type="FunFam" id="2.40.50.100:FF:000004">
    <property type="entry name" value="50S ribosomal protein L27"/>
    <property type="match status" value="1"/>
</dbReference>
<dbReference type="Gene3D" id="2.40.50.100">
    <property type="match status" value="1"/>
</dbReference>
<dbReference type="HAMAP" id="MF_00539">
    <property type="entry name" value="Ribosomal_bL27"/>
    <property type="match status" value="1"/>
</dbReference>
<dbReference type="InterPro" id="IPR001684">
    <property type="entry name" value="Ribosomal_bL27"/>
</dbReference>
<dbReference type="InterPro" id="IPR018261">
    <property type="entry name" value="Ribosomal_bL27_CS"/>
</dbReference>
<dbReference type="NCBIfam" id="TIGR00062">
    <property type="entry name" value="L27"/>
    <property type="match status" value="1"/>
</dbReference>
<dbReference type="PANTHER" id="PTHR15893:SF0">
    <property type="entry name" value="LARGE RIBOSOMAL SUBUNIT PROTEIN BL27M"/>
    <property type="match status" value="1"/>
</dbReference>
<dbReference type="PANTHER" id="PTHR15893">
    <property type="entry name" value="RIBOSOMAL PROTEIN L27"/>
    <property type="match status" value="1"/>
</dbReference>
<dbReference type="Pfam" id="PF01016">
    <property type="entry name" value="Ribosomal_L27"/>
    <property type="match status" value="1"/>
</dbReference>
<dbReference type="PRINTS" id="PR00063">
    <property type="entry name" value="RIBOSOMALL27"/>
</dbReference>
<dbReference type="SUPFAM" id="SSF110324">
    <property type="entry name" value="Ribosomal L27 protein-like"/>
    <property type="match status" value="1"/>
</dbReference>
<dbReference type="PROSITE" id="PS00831">
    <property type="entry name" value="RIBOSOMAL_L27"/>
    <property type="match status" value="1"/>
</dbReference>
<keyword id="KW-1185">Reference proteome</keyword>
<keyword id="KW-0687">Ribonucleoprotein</keyword>
<keyword id="KW-0689">Ribosomal protein</keyword>
<name>RL27_PERMH</name>
<comment type="similarity">
    <text evidence="1">Belongs to the bacterial ribosomal protein bL27 family.</text>
</comment>
<reference key="1">
    <citation type="journal article" date="2009" name="J. Bacteriol.">
        <title>Complete and draft genome sequences of six members of the Aquificales.</title>
        <authorList>
            <person name="Reysenbach A.-L."/>
            <person name="Hamamura N."/>
            <person name="Podar M."/>
            <person name="Griffiths E."/>
            <person name="Ferreira S."/>
            <person name="Hochstein R."/>
            <person name="Heidelberg J."/>
            <person name="Johnson J."/>
            <person name="Mead D."/>
            <person name="Pohorille A."/>
            <person name="Sarmiento M."/>
            <person name="Schweighofer K."/>
            <person name="Seshadri R."/>
            <person name="Voytek M.A."/>
        </authorList>
    </citation>
    <scope>NUCLEOTIDE SEQUENCE [LARGE SCALE GENOMIC DNA]</scope>
    <source>
        <strain>DSM 14350 / EX-H1</strain>
    </source>
</reference>
<accession>C0QT35</accession>
<organism>
    <name type="scientific">Persephonella marina (strain DSM 14350 / EX-H1)</name>
    <dbReference type="NCBI Taxonomy" id="123214"/>
    <lineage>
        <taxon>Bacteria</taxon>
        <taxon>Pseudomonadati</taxon>
        <taxon>Aquificota</taxon>
        <taxon>Aquificia</taxon>
        <taxon>Aquificales</taxon>
        <taxon>Hydrogenothermaceae</taxon>
        <taxon>Persephonella</taxon>
    </lineage>
</organism>
<proteinExistence type="inferred from homology"/>
<protein>
    <recommendedName>
        <fullName evidence="1">Large ribosomal subunit protein bL27</fullName>
    </recommendedName>
    <alternativeName>
        <fullName evidence="2">50S ribosomal protein L27</fullName>
    </alternativeName>
</protein>
<gene>
    <name evidence="1" type="primary">rpmA</name>
    <name type="ordered locus">PERMA_0052</name>
</gene>
<sequence>MASKKSGGSAKNGRDSFSKRLGVKRYDGQVVKAGNILVRQRGTKIYPGKNVGLGNDYTLFALIDGKVKFETSKGKKVVSVYPLDA</sequence>